<feature type="chain" id="PRO_0000101018" description="Threonine--tRNA ligase">
    <location>
        <begin position="1"/>
        <end position="646"/>
    </location>
</feature>
<feature type="domain" description="TGS" evidence="2">
    <location>
        <begin position="1"/>
        <end position="63"/>
    </location>
</feature>
<feature type="region of interest" description="Catalytic" evidence="1">
    <location>
        <begin position="244"/>
        <end position="541"/>
    </location>
</feature>
<feature type="binding site" evidence="1">
    <location>
        <position position="337"/>
    </location>
    <ligand>
        <name>Zn(2+)</name>
        <dbReference type="ChEBI" id="CHEBI:29105"/>
    </ligand>
</feature>
<feature type="binding site" evidence="1">
    <location>
        <position position="388"/>
    </location>
    <ligand>
        <name>Zn(2+)</name>
        <dbReference type="ChEBI" id="CHEBI:29105"/>
    </ligand>
</feature>
<feature type="binding site" evidence="1">
    <location>
        <position position="518"/>
    </location>
    <ligand>
        <name>Zn(2+)</name>
        <dbReference type="ChEBI" id="CHEBI:29105"/>
    </ligand>
</feature>
<dbReference type="EC" id="6.1.1.3" evidence="1"/>
<dbReference type="EMBL" id="BA000028">
    <property type="protein sequence ID" value="BAC14110.1"/>
    <property type="molecule type" value="Genomic_DNA"/>
</dbReference>
<dbReference type="RefSeq" id="WP_011066548.1">
    <property type="nucleotide sequence ID" value="NC_004193.1"/>
</dbReference>
<dbReference type="SMR" id="Q8EPF3"/>
<dbReference type="STRING" id="221109.gene:10734402"/>
<dbReference type="KEGG" id="oih:OB2154"/>
<dbReference type="eggNOG" id="COG0441">
    <property type="taxonomic scope" value="Bacteria"/>
</dbReference>
<dbReference type="HOGENOM" id="CLU_008554_0_1_9"/>
<dbReference type="OrthoDB" id="9802304at2"/>
<dbReference type="PhylomeDB" id="Q8EPF3"/>
<dbReference type="Proteomes" id="UP000000822">
    <property type="component" value="Chromosome"/>
</dbReference>
<dbReference type="GO" id="GO:0005737">
    <property type="term" value="C:cytoplasm"/>
    <property type="evidence" value="ECO:0007669"/>
    <property type="project" value="UniProtKB-SubCell"/>
</dbReference>
<dbReference type="GO" id="GO:0005524">
    <property type="term" value="F:ATP binding"/>
    <property type="evidence" value="ECO:0007669"/>
    <property type="project" value="UniProtKB-UniRule"/>
</dbReference>
<dbReference type="GO" id="GO:0140096">
    <property type="term" value="F:catalytic activity, acting on a protein"/>
    <property type="evidence" value="ECO:0007669"/>
    <property type="project" value="UniProtKB-ARBA"/>
</dbReference>
<dbReference type="GO" id="GO:0046872">
    <property type="term" value="F:metal ion binding"/>
    <property type="evidence" value="ECO:0007669"/>
    <property type="project" value="UniProtKB-KW"/>
</dbReference>
<dbReference type="GO" id="GO:0004829">
    <property type="term" value="F:threonine-tRNA ligase activity"/>
    <property type="evidence" value="ECO:0007669"/>
    <property type="project" value="UniProtKB-UniRule"/>
</dbReference>
<dbReference type="GO" id="GO:0016740">
    <property type="term" value="F:transferase activity"/>
    <property type="evidence" value="ECO:0007669"/>
    <property type="project" value="UniProtKB-ARBA"/>
</dbReference>
<dbReference type="GO" id="GO:0000049">
    <property type="term" value="F:tRNA binding"/>
    <property type="evidence" value="ECO:0007669"/>
    <property type="project" value="UniProtKB-KW"/>
</dbReference>
<dbReference type="GO" id="GO:0006435">
    <property type="term" value="P:threonyl-tRNA aminoacylation"/>
    <property type="evidence" value="ECO:0007669"/>
    <property type="project" value="UniProtKB-UniRule"/>
</dbReference>
<dbReference type="CDD" id="cd01667">
    <property type="entry name" value="TGS_ThrRS"/>
    <property type="match status" value="1"/>
</dbReference>
<dbReference type="CDD" id="cd00860">
    <property type="entry name" value="ThrRS_anticodon"/>
    <property type="match status" value="1"/>
</dbReference>
<dbReference type="CDD" id="cd00771">
    <property type="entry name" value="ThrRS_core"/>
    <property type="match status" value="1"/>
</dbReference>
<dbReference type="FunFam" id="3.10.20.30:FF:000005">
    <property type="entry name" value="Threonine--tRNA ligase"/>
    <property type="match status" value="1"/>
</dbReference>
<dbReference type="FunFam" id="3.30.54.20:FF:000002">
    <property type="entry name" value="Threonine--tRNA ligase"/>
    <property type="match status" value="1"/>
</dbReference>
<dbReference type="FunFam" id="3.30.930.10:FF:000002">
    <property type="entry name" value="Threonine--tRNA ligase"/>
    <property type="match status" value="1"/>
</dbReference>
<dbReference type="FunFam" id="3.40.50.800:FF:000001">
    <property type="entry name" value="Threonine--tRNA ligase"/>
    <property type="match status" value="1"/>
</dbReference>
<dbReference type="FunFam" id="3.30.980.10:FF:000005">
    <property type="entry name" value="Threonyl-tRNA synthetase, mitochondrial"/>
    <property type="match status" value="1"/>
</dbReference>
<dbReference type="Gene3D" id="3.10.20.30">
    <property type="match status" value="1"/>
</dbReference>
<dbReference type="Gene3D" id="3.30.54.20">
    <property type="match status" value="1"/>
</dbReference>
<dbReference type="Gene3D" id="3.40.50.800">
    <property type="entry name" value="Anticodon-binding domain"/>
    <property type="match status" value="1"/>
</dbReference>
<dbReference type="Gene3D" id="3.30.930.10">
    <property type="entry name" value="Bira Bifunctional Protein, Domain 2"/>
    <property type="match status" value="1"/>
</dbReference>
<dbReference type="Gene3D" id="3.30.980.10">
    <property type="entry name" value="Threonyl-trna Synthetase, Chain A, domain 2"/>
    <property type="match status" value="1"/>
</dbReference>
<dbReference type="HAMAP" id="MF_00184">
    <property type="entry name" value="Thr_tRNA_synth"/>
    <property type="match status" value="1"/>
</dbReference>
<dbReference type="InterPro" id="IPR002314">
    <property type="entry name" value="aa-tRNA-synt_IIb"/>
</dbReference>
<dbReference type="InterPro" id="IPR006195">
    <property type="entry name" value="aa-tRNA-synth_II"/>
</dbReference>
<dbReference type="InterPro" id="IPR045864">
    <property type="entry name" value="aa-tRNA-synth_II/BPL/LPL"/>
</dbReference>
<dbReference type="InterPro" id="IPR004154">
    <property type="entry name" value="Anticodon-bd"/>
</dbReference>
<dbReference type="InterPro" id="IPR036621">
    <property type="entry name" value="Anticodon-bd_dom_sf"/>
</dbReference>
<dbReference type="InterPro" id="IPR012675">
    <property type="entry name" value="Beta-grasp_dom_sf"/>
</dbReference>
<dbReference type="InterPro" id="IPR004095">
    <property type="entry name" value="TGS"/>
</dbReference>
<dbReference type="InterPro" id="IPR012676">
    <property type="entry name" value="TGS-like"/>
</dbReference>
<dbReference type="InterPro" id="IPR002320">
    <property type="entry name" value="Thr-tRNA-ligase_IIa"/>
</dbReference>
<dbReference type="InterPro" id="IPR018163">
    <property type="entry name" value="Thr/Ala-tRNA-synth_IIc_edit"/>
</dbReference>
<dbReference type="InterPro" id="IPR047246">
    <property type="entry name" value="ThrRS_anticodon"/>
</dbReference>
<dbReference type="InterPro" id="IPR033728">
    <property type="entry name" value="ThrRS_core"/>
</dbReference>
<dbReference type="InterPro" id="IPR012947">
    <property type="entry name" value="tRNA_SAD"/>
</dbReference>
<dbReference type="NCBIfam" id="TIGR00418">
    <property type="entry name" value="thrS"/>
    <property type="match status" value="1"/>
</dbReference>
<dbReference type="PANTHER" id="PTHR11451:SF56">
    <property type="entry name" value="THREONINE--TRNA LIGASE 1"/>
    <property type="match status" value="1"/>
</dbReference>
<dbReference type="PANTHER" id="PTHR11451">
    <property type="entry name" value="THREONINE-TRNA LIGASE"/>
    <property type="match status" value="1"/>
</dbReference>
<dbReference type="Pfam" id="PF03129">
    <property type="entry name" value="HGTP_anticodon"/>
    <property type="match status" value="1"/>
</dbReference>
<dbReference type="Pfam" id="PF02824">
    <property type="entry name" value="TGS"/>
    <property type="match status" value="1"/>
</dbReference>
<dbReference type="Pfam" id="PF00587">
    <property type="entry name" value="tRNA-synt_2b"/>
    <property type="match status" value="1"/>
</dbReference>
<dbReference type="Pfam" id="PF07973">
    <property type="entry name" value="tRNA_SAD"/>
    <property type="match status" value="1"/>
</dbReference>
<dbReference type="PRINTS" id="PR01047">
    <property type="entry name" value="TRNASYNTHTHR"/>
</dbReference>
<dbReference type="SMART" id="SM00863">
    <property type="entry name" value="tRNA_SAD"/>
    <property type="match status" value="1"/>
</dbReference>
<dbReference type="SUPFAM" id="SSF52954">
    <property type="entry name" value="Class II aaRS ABD-related"/>
    <property type="match status" value="1"/>
</dbReference>
<dbReference type="SUPFAM" id="SSF55681">
    <property type="entry name" value="Class II aaRS and biotin synthetases"/>
    <property type="match status" value="1"/>
</dbReference>
<dbReference type="SUPFAM" id="SSF81271">
    <property type="entry name" value="TGS-like"/>
    <property type="match status" value="1"/>
</dbReference>
<dbReference type="SUPFAM" id="SSF55186">
    <property type="entry name" value="ThrRS/AlaRS common domain"/>
    <property type="match status" value="1"/>
</dbReference>
<dbReference type="PROSITE" id="PS50862">
    <property type="entry name" value="AA_TRNA_LIGASE_II"/>
    <property type="match status" value="1"/>
</dbReference>
<dbReference type="PROSITE" id="PS51880">
    <property type="entry name" value="TGS"/>
    <property type="match status" value="1"/>
</dbReference>
<sequence>MADLSIIFPDGSEKQFPVGTTGEEIAASISPGLKKQALAIKLDGELVDLRRELSSGGSIEIITYKNNEGLEVLRHSSAHLLAQAIKRLFNDVKLGVGPVIEEGFYYDIDMEHKLTPEDLPKIEKEMKRIIDENLEIKRVEVSRNKAQEMFSDIGDDLKLELIDAIPENEQVTIYEQGEFFDLCRGIHVPSTSKIKAFKLLSISGAYWRGDSNNKQLQRIYGTAFEKKGQLEEHLQILEERKERDHRKLGKELGIFTVSQKVGQGLPLWLPKGATIRRNVERYIVDLEERLGYSHVYTPVLGNVELYKTSGHWDHYQDDMFPTMEMDNEELVLRPMNCPHHMMVFKNQLWSYRNLPVRIAELGTMHRHEMSGALAGLQRVRAMTLNDAHIFARPDQLKEEFIRVVELVQHVYKDFGIDDYYFRLSYRDPEDKEKYVDNDEMWEKAQAMLKETMEDMNLEYVEAEGEAAFYGPKLDVQVKTALGKDETLSTIQLDFHLPERFDLTYIGEDGNQHRPVVIHRGVVSTMERFVAFLIEEYKGAFPTWLAPVQVKIIPVSLQAHLDYAKDIEEKLRYQGVRVELDERDEKIGYKIREAQTQKVPFALVLGDKEMESNSVNYRRYGEQDTETLEFDQFLNLIKEEVDNKKIK</sequence>
<keyword id="KW-0030">Aminoacyl-tRNA synthetase</keyword>
<keyword id="KW-0067">ATP-binding</keyword>
<keyword id="KW-0963">Cytoplasm</keyword>
<keyword id="KW-0436">Ligase</keyword>
<keyword id="KW-0479">Metal-binding</keyword>
<keyword id="KW-0547">Nucleotide-binding</keyword>
<keyword id="KW-0648">Protein biosynthesis</keyword>
<keyword id="KW-1185">Reference proteome</keyword>
<keyword id="KW-0694">RNA-binding</keyword>
<keyword id="KW-0820">tRNA-binding</keyword>
<keyword id="KW-0862">Zinc</keyword>
<proteinExistence type="inferred from homology"/>
<protein>
    <recommendedName>
        <fullName evidence="1">Threonine--tRNA ligase</fullName>
        <ecNumber evidence="1">6.1.1.3</ecNumber>
    </recommendedName>
    <alternativeName>
        <fullName evidence="1">Threonyl-tRNA synthetase</fullName>
        <shortName evidence="1">ThrRS</shortName>
    </alternativeName>
</protein>
<gene>
    <name evidence="1" type="primary">thrS</name>
    <name type="ordered locus">OB2154</name>
</gene>
<reference key="1">
    <citation type="journal article" date="2002" name="Nucleic Acids Res.">
        <title>Genome sequence of Oceanobacillus iheyensis isolated from the Iheya Ridge and its unexpected adaptive capabilities to extreme environments.</title>
        <authorList>
            <person name="Takami H."/>
            <person name="Takaki Y."/>
            <person name="Uchiyama I."/>
        </authorList>
    </citation>
    <scope>NUCLEOTIDE SEQUENCE [LARGE SCALE GENOMIC DNA]</scope>
    <source>
        <strain>DSM 14371 / CIP 107618 / JCM 11309 / KCTC 3954 / HTE831</strain>
    </source>
</reference>
<organism>
    <name type="scientific">Oceanobacillus iheyensis (strain DSM 14371 / CIP 107618 / JCM 11309 / KCTC 3954 / HTE831)</name>
    <dbReference type="NCBI Taxonomy" id="221109"/>
    <lineage>
        <taxon>Bacteria</taxon>
        <taxon>Bacillati</taxon>
        <taxon>Bacillota</taxon>
        <taxon>Bacilli</taxon>
        <taxon>Bacillales</taxon>
        <taxon>Bacillaceae</taxon>
        <taxon>Oceanobacillus</taxon>
    </lineage>
</organism>
<comment type="function">
    <text evidence="1">Catalyzes the attachment of threonine to tRNA(Thr) in a two-step reaction: L-threonine is first activated by ATP to form Thr-AMP and then transferred to the acceptor end of tRNA(Thr). Also edits incorrectly charged L-seryl-tRNA(Thr).</text>
</comment>
<comment type="catalytic activity">
    <reaction evidence="1">
        <text>tRNA(Thr) + L-threonine + ATP = L-threonyl-tRNA(Thr) + AMP + diphosphate + H(+)</text>
        <dbReference type="Rhea" id="RHEA:24624"/>
        <dbReference type="Rhea" id="RHEA-COMP:9670"/>
        <dbReference type="Rhea" id="RHEA-COMP:9704"/>
        <dbReference type="ChEBI" id="CHEBI:15378"/>
        <dbReference type="ChEBI" id="CHEBI:30616"/>
        <dbReference type="ChEBI" id="CHEBI:33019"/>
        <dbReference type="ChEBI" id="CHEBI:57926"/>
        <dbReference type="ChEBI" id="CHEBI:78442"/>
        <dbReference type="ChEBI" id="CHEBI:78534"/>
        <dbReference type="ChEBI" id="CHEBI:456215"/>
        <dbReference type="EC" id="6.1.1.3"/>
    </reaction>
</comment>
<comment type="cofactor">
    <cofactor evidence="1">
        <name>Zn(2+)</name>
        <dbReference type="ChEBI" id="CHEBI:29105"/>
    </cofactor>
    <text evidence="1">Binds 1 zinc ion per subunit.</text>
</comment>
<comment type="subunit">
    <text evidence="1">Homodimer.</text>
</comment>
<comment type="subcellular location">
    <subcellularLocation>
        <location evidence="1">Cytoplasm</location>
    </subcellularLocation>
</comment>
<comment type="similarity">
    <text evidence="1">Belongs to the class-II aminoacyl-tRNA synthetase family.</text>
</comment>
<name>SYT_OCEIH</name>
<accession>Q8EPF3</accession>
<evidence type="ECO:0000255" key="1">
    <source>
        <dbReference type="HAMAP-Rule" id="MF_00184"/>
    </source>
</evidence>
<evidence type="ECO:0000255" key="2">
    <source>
        <dbReference type="PROSITE-ProRule" id="PRU01228"/>
    </source>
</evidence>